<sequence length="203" mass="22146">MIGRLRGIILEKQPPIVLLETGGVGYEVHMPMTCFYELPEAGQEAIVFTHFVVREDAQLLYGFNNKQERTLFKELIKTNGVGPKLALAILSGMSAQQFVNAVEREELGALVKLPGIGKKTAERLIVEMKDRFKGLHGDLFTPAVDLVLTSPASPTSEDAEQEAVAALVALGYKPQEASRMVSKIARPDASSETLIRDALRAAL</sequence>
<accession>B5R1V8</accession>
<dbReference type="EMBL" id="AM933172">
    <property type="protein sequence ID" value="CAR32691.1"/>
    <property type="molecule type" value="Genomic_DNA"/>
</dbReference>
<dbReference type="RefSeq" id="WP_000580335.1">
    <property type="nucleotide sequence ID" value="NC_011294.1"/>
</dbReference>
<dbReference type="SMR" id="B5R1V8"/>
<dbReference type="KEGG" id="set:SEN1108"/>
<dbReference type="HOGENOM" id="CLU_087936_0_0_6"/>
<dbReference type="Proteomes" id="UP000000613">
    <property type="component" value="Chromosome"/>
</dbReference>
<dbReference type="GO" id="GO:0005737">
    <property type="term" value="C:cytoplasm"/>
    <property type="evidence" value="ECO:0007669"/>
    <property type="project" value="UniProtKB-SubCell"/>
</dbReference>
<dbReference type="GO" id="GO:0009379">
    <property type="term" value="C:Holliday junction helicase complex"/>
    <property type="evidence" value="ECO:0007669"/>
    <property type="project" value="InterPro"/>
</dbReference>
<dbReference type="GO" id="GO:0048476">
    <property type="term" value="C:Holliday junction resolvase complex"/>
    <property type="evidence" value="ECO:0007669"/>
    <property type="project" value="UniProtKB-UniRule"/>
</dbReference>
<dbReference type="GO" id="GO:0005524">
    <property type="term" value="F:ATP binding"/>
    <property type="evidence" value="ECO:0007669"/>
    <property type="project" value="InterPro"/>
</dbReference>
<dbReference type="GO" id="GO:0000400">
    <property type="term" value="F:four-way junction DNA binding"/>
    <property type="evidence" value="ECO:0007669"/>
    <property type="project" value="UniProtKB-UniRule"/>
</dbReference>
<dbReference type="GO" id="GO:0009378">
    <property type="term" value="F:four-way junction helicase activity"/>
    <property type="evidence" value="ECO:0007669"/>
    <property type="project" value="InterPro"/>
</dbReference>
<dbReference type="GO" id="GO:0006310">
    <property type="term" value="P:DNA recombination"/>
    <property type="evidence" value="ECO:0007669"/>
    <property type="project" value="UniProtKB-UniRule"/>
</dbReference>
<dbReference type="GO" id="GO:0006281">
    <property type="term" value="P:DNA repair"/>
    <property type="evidence" value="ECO:0007669"/>
    <property type="project" value="UniProtKB-UniRule"/>
</dbReference>
<dbReference type="CDD" id="cd14332">
    <property type="entry name" value="UBA_RuvA_C"/>
    <property type="match status" value="1"/>
</dbReference>
<dbReference type="FunFam" id="1.10.150.20:FF:000012">
    <property type="entry name" value="Holliday junction ATP-dependent DNA helicase RuvA"/>
    <property type="match status" value="1"/>
</dbReference>
<dbReference type="FunFam" id="1.10.8.10:FF:000008">
    <property type="entry name" value="Holliday junction ATP-dependent DNA helicase RuvA"/>
    <property type="match status" value="1"/>
</dbReference>
<dbReference type="FunFam" id="2.40.50.140:FF:000083">
    <property type="entry name" value="Holliday junction ATP-dependent DNA helicase RuvA"/>
    <property type="match status" value="1"/>
</dbReference>
<dbReference type="Gene3D" id="1.10.150.20">
    <property type="entry name" value="5' to 3' exonuclease, C-terminal subdomain"/>
    <property type="match status" value="1"/>
</dbReference>
<dbReference type="Gene3D" id="1.10.8.10">
    <property type="entry name" value="DNA helicase RuvA subunit, C-terminal domain"/>
    <property type="match status" value="1"/>
</dbReference>
<dbReference type="Gene3D" id="2.40.50.140">
    <property type="entry name" value="Nucleic acid-binding proteins"/>
    <property type="match status" value="1"/>
</dbReference>
<dbReference type="HAMAP" id="MF_00031">
    <property type="entry name" value="DNA_HJ_migration_RuvA"/>
    <property type="match status" value="1"/>
</dbReference>
<dbReference type="InterPro" id="IPR013849">
    <property type="entry name" value="DNA_helicase_Holl-junc_RuvA_I"/>
</dbReference>
<dbReference type="InterPro" id="IPR003583">
    <property type="entry name" value="Hlx-hairpin-Hlx_DNA-bd_motif"/>
</dbReference>
<dbReference type="InterPro" id="IPR012340">
    <property type="entry name" value="NA-bd_OB-fold"/>
</dbReference>
<dbReference type="InterPro" id="IPR000085">
    <property type="entry name" value="RuvA"/>
</dbReference>
<dbReference type="InterPro" id="IPR010994">
    <property type="entry name" value="RuvA_2-like"/>
</dbReference>
<dbReference type="InterPro" id="IPR011114">
    <property type="entry name" value="RuvA_C"/>
</dbReference>
<dbReference type="InterPro" id="IPR036267">
    <property type="entry name" value="RuvA_C_sf"/>
</dbReference>
<dbReference type="NCBIfam" id="TIGR00084">
    <property type="entry name" value="ruvA"/>
    <property type="match status" value="1"/>
</dbReference>
<dbReference type="Pfam" id="PF14520">
    <property type="entry name" value="HHH_5"/>
    <property type="match status" value="1"/>
</dbReference>
<dbReference type="Pfam" id="PF07499">
    <property type="entry name" value="RuvA_C"/>
    <property type="match status" value="1"/>
</dbReference>
<dbReference type="Pfam" id="PF01330">
    <property type="entry name" value="RuvA_N"/>
    <property type="match status" value="1"/>
</dbReference>
<dbReference type="SMART" id="SM00278">
    <property type="entry name" value="HhH1"/>
    <property type="match status" value="2"/>
</dbReference>
<dbReference type="SUPFAM" id="SSF46929">
    <property type="entry name" value="DNA helicase RuvA subunit, C-terminal domain"/>
    <property type="match status" value="1"/>
</dbReference>
<dbReference type="SUPFAM" id="SSF50249">
    <property type="entry name" value="Nucleic acid-binding proteins"/>
    <property type="match status" value="1"/>
</dbReference>
<dbReference type="SUPFAM" id="SSF47781">
    <property type="entry name" value="RuvA domain 2-like"/>
    <property type="match status" value="1"/>
</dbReference>
<evidence type="ECO:0000255" key="1">
    <source>
        <dbReference type="HAMAP-Rule" id="MF_00031"/>
    </source>
</evidence>
<protein>
    <recommendedName>
        <fullName evidence="1">Holliday junction branch migration complex subunit RuvA</fullName>
    </recommendedName>
</protein>
<feature type="chain" id="PRO_1000090363" description="Holliday junction branch migration complex subunit RuvA">
    <location>
        <begin position="1"/>
        <end position="203"/>
    </location>
</feature>
<feature type="region of interest" description="Domain I" evidence="1">
    <location>
        <begin position="1"/>
        <end position="64"/>
    </location>
</feature>
<feature type="region of interest" description="Domain II" evidence="1">
    <location>
        <begin position="65"/>
        <end position="142"/>
    </location>
</feature>
<feature type="region of interest" description="Flexible linker" evidence="1">
    <location>
        <begin position="143"/>
        <end position="154"/>
    </location>
</feature>
<feature type="region of interest" description="Domain III" evidence="1">
    <location>
        <begin position="155"/>
        <end position="203"/>
    </location>
</feature>
<gene>
    <name evidence="1" type="primary">ruvA</name>
    <name type="ordered locus">SEN1108</name>
</gene>
<name>RUVA_SALEP</name>
<keyword id="KW-0963">Cytoplasm</keyword>
<keyword id="KW-0227">DNA damage</keyword>
<keyword id="KW-0233">DNA recombination</keyword>
<keyword id="KW-0234">DNA repair</keyword>
<keyword id="KW-0238">DNA-binding</keyword>
<proteinExistence type="inferred from homology"/>
<organism>
    <name type="scientific">Salmonella enteritidis PT4 (strain P125109)</name>
    <dbReference type="NCBI Taxonomy" id="550537"/>
    <lineage>
        <taxon>Bacteria</taxon>
        <taxon>Pseudomonadati</taxon>
        <taxon>Pseudomonadota</taxon>
        <taxon>Gammaproteobacteria</taxon>
        <taxon>Enterobacterales</taxon>
        <taxon>Enterobacteriaceae</taxon>
        <taxon>Salmonella</taxon>
    </lineage>
</organism>
<comment type="function">
    <text evidence="1">The RuvA-RuvB-RuvC complex processes Holliday junction (HJ) DNA during genetic recombination and DNA repair, while the RuvA-RuvB complex plays an important role in the rescue of blocked DNA replication forks via replication fork reversal (RFR). RuvA specifically binds to HJ cruciform DNA, conferring on it an open structure. The RuvB hexamer acts as an ATP-dependent pump, pulling dsDNA into and through the RuvAB complex. HJ branch migration allows RuvC to scan DNA until it finds its consensus sequence, where it cleaves and resolves the cruciform DNA.</text>
</comment>
<comment type="subunit">
    <text evidence="1">Homotetramer. Forms an RuvA(8)-RuvB(12)-Holliday junction (HJ) complex. HJ DNA is sandwiched between 2 RuvA tetramers; dsDNA enters through RuvA and exits via RuvB. An RuvB hexamer assembles on each DNA strand where it exits the tetramer. Each RuvB hexamer is contacted by two RuvA subunits (via domain III) on 2 adjacent RuvB subunits; this complex drives branch migration. In the full resolvosome a probable DNA-RuvA(4)-RuvB(12)-RuvC(2) complex forms which resolves the HJ.</text>
</comment>
<comment type="subcellular location">
    <subcellularLocation>
        <location evidence="1">Cytoplasm</location>
    </subcellularLocation>
</comment>
<comment type="domain">
    <text evidence="1">Has three domains with a flexible linker between the domains II and III and assumes an 'L' shape. Domain III is highly mobile and contacts RuvB.</text>
</comment>
<comment type="similarity">
    <text evidence="1">Belongs to the RuvA family.</text>
</comment>
<reference key="1">
    <citation type="journal article" date="2008" name="Genome Res.">
        <title>Comparative genome analysis of Salmonella enteritidis PT4 and Salmonella gallinarum 287/91 provides insights into evolutionary and host adaptation pathways.</title>
        <authorList>
            <person name="Thomson N.R."/>
            <person name="Clayton D.J."/>
            <person name="Windhorst D."/>
            <person name="Vernikos G."/>
            <person name="Davidson S."/>
            <person name="Churcher C."/>
            <person name="Quail M.A."/>
            <person name="Stevens M."/>
            <person name="Jones M.A."/>
            <person name="Watson M."/>
            <person name="Barron A."/>
            <person name="Layton A."/>
            <person name="Pickard D."/>
            <person name="Kingsley R.A."/>
            <person name="Bignell A."/>
            <person name="Clark L."/>
            <person name="Harris B."/>
            <person name="Ormond D."/>
            <person name="Abdellah Z."/>
            <person name="Brooks K."/>
            <person name="Cherevach I."/>
            <person name="Chillingworth T."/>
            <person name="Woodward J."/>
            <person name="Norberczak H."/>
            <person name="Lord A."/>
            <person name="Arrowsmith C."/>
            <person name="Jagels K."/>
            <person name="Moule S."/>
            <person name="Mungall K."/>
            <person name="Saunders M."/>
            <person name="Whitehead S."/>
            <person name="Chabalgoity J.A."/>
            <person name="Maskell D."/>
            <person name="Humphreys T."/>
            <person name="Roberts M."/>
            <person name="Barrow P.A."/>
            <person name="Dougan G."/>
            <person name="Parkhill J."/>
        </authorList>
    </citation>
    <scope>NUCLEOTIDE SEQUENCE [LARGE SCALE GENOMIC DNA]</scope>
    <source>
        <strain>P125109</strain>
    </source>
</reference>